<keyword id="KW-0687">Ribonucleoprotein</keyword>
<keyword id="KW-0689">Ribosomal protein</keyword>
<evidence type="ECO:0000255" key="1">
    <source>
        <dbReference type="HAMAP-Rule" id="MF_00402"/>
    </source>
</evidence>
<evidence type="ECO:0000305" key="2"/>
<name>RL19_CLOBJ</name>
<sequence length="114" mass="13106">MLEVIKAIEAEQVRSDLPEFNVGDTVKVHQKIKEGTRERVQVFEGTVLKRQNGGARETFTVRRVAYNVAVEKTFPVNSPLIEKIQVVRKGKVRRAKLYYLRDRVGKAAKVKERI</sequence>
<proteinExistence type="inferred from homology"/>
<reference key="1">
    <citation type="submission" date="2008-10" db="EMBL/GenBank/DDBJ databases">
        <title>Genome sequence of Clostridium botulinum A2 Kyoto.</title>
        <authorList>
            <person name="Shrivastava S."/>
            <person name="Brinkac L.M."/>
            <person name="Brown J.L."/>
            <person name="Bruce D."/>
            <person name="Detter C.C."/>
            <person name="Johnson E.A."/>
            <person name="Munk C.A."/>
            <person name="Smith L.A."/>
            <person name="Smith T.J."/>
            <person name="Sutton G."/>
            <person name="Brettin T.S."/>
        </authorList>
    </citation>
    <scope>NUCLEOTIDE SEQUENCE [LARGE SCALE GENOMIC DNA]</scope>
    <source>
        <strain>Kyoto / Type A2</strain>
    </source>
</reference>
<accession>C1FSL4</accession>
<gene>
    <name evidence="1" type="primary">rplS</name>
    <name type="ordered locus">CLM_2737</name>
</gene>
<comment type="function">
    <text evidence="1">This protein is located at the 30S-50S ribosomal subunit interface and may play a role in the structure and function of the aminoacyl-tRNA binding site.</text>
</comment>
<comment type="similarity">
    <text evidence="1">Belongs to the bacterial ribosomal protein bL19 family.</text>
</comment>
<feature type="chain" id="PRO_1000134564" description="Large ribosomal subunit protein bL19">
    <location>
        <begin position="1"/>
        <end position="114"/>
    </location>
</feature>
<protein>
    <recommendedName>
        <fullName evidence="1">Large ribosomal subunit protein bL19</fullName>
    </recommendedName>
    <alternativeName>
        <fullName evidence="2">50S ribosomal protein L19</fullName>
    </alternativeName>
</protein>
<organism>
    <name type="scientific">Clostridium botulinum (strain Kyoto / Type A2)</name>
    <dbReference type="NCBI Taxonomy" id="536232"/>
    <lineage>
        <taxon>Bacteria</taxon>
        <taxon>Bacillati</taxon>
        <taxon>Bacillota</taxon>
        <taxon>Clostridia</taxon>
        <taxon>Eubacteriales</taxon>
        <taxon>Clostridiaceae</taxon>
        <taxon>Clostridium</taxon>
    </lineage>
</organism>
<dbReference type="EMBL" id="CP001581">
    <property type="protein sequence ID" value="ACO84566.1"/>
    <property type="molecule type" value="Genomic_DNA"/>
</dbReference>
<dbReference type="RefSeq" id="WP_003362586.1">
    <property type="nucleotide sequence ID" value="NC_012563.1"/>
</dbReference>
<dbReference type="SMR" id="C1FSL4"/>
<dbReference type="GeneID" id="5186699"/>
<dbReference type="KEGG" id="cby:CLM_2737"/>
<dbReference type="eggNOG" id="COG0335">
    <property type="taxonomic scope" value="Bacteria"/>
</dbReference>
<dbReference type="HOGENOM" id="CLU_103507_2_2_9"/>
<dbReference type="Proteomes" id="UP000001374">
    <property type="component" value="Chromosome"/>
</dbReference>
<dbReference type="GO" id="GO:0022625">
    <property type="term" value="C:cytosolic large ribosomal subunit"/>
    <property type="evidence" value="ECO:0007669"/>
    <property type="project" value="TreeGrafter"/>
</dbReference>
<dbReference type="GO" id="GO:0003735">
    <property type="term" value="F:structural constituent of ribosome"/>
    <property type="evidence" value="ECO:0007669"/>
    <property type="project" value="InterPro"/>
</dbReference>
<dbReference type="GO" id="GO:0006412">
    <property type="term" value="P:translation"/>
    <property type="evidence" value="ECO:0007669"/>
    <property type="project" value="UniProtKB-UniRule"/>
</dbReference>
<dbReference type="FunFam" id="2.30.30.790:FF:000009">
    <property type="entry name" value="50S ribosomal protein L19"/>
    <property type="match status" value="1"/>
</dbReference>
<dbReference type="Gene3D" id="2.30.30.790">
    <property type="match status" value="1"/>
</dbReference>
<dbReference type="HAMAP" id="MF_00402">
    <property type="entry name" value="Ribosomal_bL19"/>
    <property type="match status" value="1"/>
</dbReference>
<dbReference type="InterPro" id="IPR001857">
    <property type="entry name" value="Ribosomal_bL19"/>
</dbReference>
<dbReference type="InterPro" id="IPR018257">
    <property type="entry name" value="Ribosomal_bL19_CS"/>
</dbReference>
<dbReference type="InterPro" id="IPR038657">
    <property type="entry name" value="Ribosomal_bL19_sf"/>
</dbReference>
<dbReference type="InterPro" id="IPR008991">
    <property type="entry name" value="Translation_prot_SH3-like_sf"/>
</dbReference>
<dbReference type="NCBIfam" id="TIGR01024">
    <property type="entry name" value="rplS_bact"/>
    <property type="match status" value="1"/>
</dbReference>
<dbReference type="PANTHER" id="PTHR15680:SF9">
    <property type="entry name" value="LARGE RIBOSOMAL SUBUNIT PROTEIN BL19M"/>
    <property type="match status" value="1"/>
</dbReference>
<dbReference type="PANTHER" id="PTHR15680">
    <property type="entry name" value="RIBOSOMAL PROTEIN L19"/>
    <property type="match status" value="1"/>
</dbReference>
<dbReference type="Pfam" id="PF01245">
    <property type="entry name" value="Ribosomal_L19"/>
    <property type="match status" value="1"/>
</dbReference>
<dbReference type="PIRSF" id="PIRSF002191">
    <property type="entry name" value="Ribosomal_L19"/>
    <property type="match status" value="1"/>
</dbReference>
<dbReference type="PRINTS" id="PR00061">
    <property type="entry name" value="RIBOSOMALL19"/>
</dbReference>
<dbReference type="SUPFAM" id="SSF50104">
    <property type="entry name" value="Translation proteins SH3-like domain"/>
    <property type="match status" value="1"/>
</dbReference>
<dbReference type="PROSITE" id="PS01015">
    <property type="entry name" value="RIBOSOMAL_L19"/>
    <property type="match status" value="1"/>
</dbReference>